<organism>
    <name type="scientific">Ostreococcus tauri</name>
    <dbReference type="NCBI Taxonomy" id="70448"/>
    <lineage>
        <taxon>Eukaryota</taxon>
        <taxon>Viridiplantae</taxon>
        <taxon>Chlorophyta</taxon>
        <taxon>Mamiellophyceae</taxon>
        <taxon>Mamiellales</taxon>
        <taxon>Bathycoccaceae</taxon>
        <taxon>Ostreococcus</taxon>
    </lineage>
</organism>
<keyword id="KW-0251">Elongation factor</keyword>
<keyword id="KW-0496">Mitochondrion</keyword>
<keyword id="KW-0648">Protein biosynthesis</keyword>
<keyword id="KW-1185">Reference proteome</keyword>
<keyword id="KW-0809">Transit peptide</keyword>
<feature type="transit peptide" description="Mitochondrion" evidence="1">
    <location>
        <begin position="1"/>
        <end position="42"/>
    </location>
</feature>
<feature type="chain" id="PRO_0000402328" description="Elongation factor Ts, mitochondrial">
    <location>
        <begin position="43"/>
        <end position="338"/>
    </location>
</feature>
<sequence>MSPSIAMFTLTPNARALASKTSKMDLIKNLRERTGAPIVDVKAALTAHDYDSEAAYDALRAKGLAAAAKKAGRTSADGAVAALSGDRGVVLFEVNSETDFVARGESFQSLIKECAEATLRAVESDRAMTEEHGTATAGALRALRDERIGELLTSDGKPLSDAVRDVAVHVRENVRLRRAFAYAATVGAGEVIGTYVHGALAPGVGKQAACVVAKGVSEEFANKLAMHVVASSPLYLRSDCVPTDVMERELAVFRTQTEGSGKPANIVEKILAGRMNKYYEEVCLENQKFILDDSMTVEKAVKAEGGELVAFSRVKVGEGIEVEEKDFAAEVAEAVRTT</sequence>
<proteinExistence type="inferred from homology"/>
<evidence type="ECO:0000255" key="1"/>
<evidence type="ECO:0000255" key="2">
    <source>
        <dbReference type="HAMAP-Rule" id="MF_03135"/>
    </source>
</evidence>
<evidence type="ECO:0000312" key="3">
    <source>
        <dbReference type="EMBL" id="CEG01257.1"/>
    </source>
</evidence>
<protein>
    <recommendedName>
        <fullName evidence="2">Elongation factor Ts, mitochondrial</fullName>
        <shortName evidence="2">EF-Ts</shortName>
        <shortName evidence="2">EF-TsMt</shortName>
    </recommendedName>
</protein>
<accession>Q016E7</accession>
<accession>A0A096PAC1</accession>
<reference key="1">
    <citation type="journal article" date="2006" name="Proc. Natl. Acad. Sci. U.S.A.">
        <title>Genome analysis of the smallest free-living eukaryote Ostreococcus tauri unveils many unique features.</title>
        <authorList>
            <person name="Derelle E."/>
            <person name="Ferraz C."/>
            <person name="Rombauts S."/>
            <person name="Rouze P."/>
            <person name="Worden A.Z."/>
            <person name="Robbens S."/>
            <person name="Partensky F."/>
            <person name="Degroeve S."/>
            <person name="Echeynie S."/>
            <person name="Cooke R."/>
            <person name="Saeys Y."/>
            <person name="Wuyts J."/>
            <person name="Jabbari K."/>
            <person name="Bowler C."/>
            <person name="Panaud O."/>
            <person name="Piegu B."/>
            <person name="Ball S.G."/>
            <person name="Ral J.-P."/>
            <person name="Bouget F.-Y."/>
            <person name="Piganeau G."/>
            <person name="De Baets B."/>
            <person name="Picard A."/>
            <person name="Delseny M."/>
            <person name="Demaille J."/>
            <person name="Van de Peer Y."/>
            <person name="Moreau H."/>
        </authorList>
    </citation>
    <scope>NUCLEOTIDE SEQUENCE [LARGE SCALE GENOMIC DNA]</scope>
    <source>
        <strain>OTTH0595</strain>
    </source>
</reference>
<name>EFTS_OSTTA</name>
<comment type="function">
    <text evidence="2">Associates with the EF-Tu.GDP complex and induces the exchange of GDP to GTP. It remains bound to the aminoacyl-tRNA.EF-Tu.GTP complex up to the GTP hydrolysis stage on the ribosome.</text>
</comment>
<comment type="subcellular location">
    <subcellularLocation>
        <location evidence="2">Mitochondrion</location>
    </subcellularLocation>
</comment>
<comment type="similarity">
    <text evidence="2">Belongs to the EF-Ts family.</text>
</comment>
<dbReference type="EMBL" id="CAID01000002">
    <property type="protein sequence ID" value="CEG01257.1"/>
    <property type="molecule type" value="Genomic_DNA"/>
</dbReference>
<dbReference type="SMR" id="Q016E7"/>
<dbReference type="FunCoup" id="Q016E7">
    <property type="interactions" value="1685"/>
</dbReference>
<dbReference type="STRING" id="70448.Q016E7"/>
<dbReference type="eggNOG" id="KOG1071">
    <property type="taxonomic scope" value="Eukaryota"/>
</dbReference>
<dbReference type="InParanoid" id="Q016E7"/>
<dbReference type="OrthoDB" id="277235at2759"/>
<dbReference type="Proteomes" id="UP000009170">
    <property type="component" value="Chromosome 2"/>
</dbReference>
<dbReference type="GO" id="GO:0005739">
    <property type="term" value="C:mitochondrion"/>
    <property type="evidence" value="ECO:0007669"/>
    <property type="project" value="UniProtKB-SubCell"/>
</dbReference>
<dbReference type="GO" id="GO:0003746">
    <property type="term" value="F:translation elongation factor activity"/>
    <property type="evidence" value="ECO:0007669"/>
    <property type="project" value="UniProtKB-UniRule"/>
</dbReference>
<dbReference type="GO" id="GO:0070125">
    <property type="term" value="P:mitochondrial translational elongation"/>
    <property type="evidence" value="ECO:0007669"/>
    <property type="project" value="TreeGrafter"/>
</dbReference>
<dbReference type="CDD" id="cd14275">
    <property type="entry name" value="UBA_EF-Ts"/>
    <property type="match status" value="1"/>
</dbReference>
<dbReference type="FunFam" id="1.10.286.20:FF:000001">
    <property type="entry name" value="Elongation factor Ts"/>
    <property type="match status" value="1"/>
</dbReference>
<dbReference type="FunFam" id="1.10.8.10:FF:000001">
    <property type="entry name" value="Elongation factor Ts"/>
    <property type="match status" value="1"/>
</dbReference>
<dbReference type="Gene3D" id="1.10.286.20">
    <property type="match status" value="1"/>
</dbReference>
<dbReference type="Gene3D" id="1.10.8.10">
    <property type="entry name" value="DNA helicase RuvA subunit, C-terminal domain"/>
    <property type="match status" value="1"/>
</dbReference>
<dbReference type="Gene3D" id="3.30.479.20">
    <property type="entry name" value="Elongation factor Ts, dimerisation domain"/>
    <property type="match status" value="2"/>
</dbReference>
<dbReference type="HAMAP" id="MF_00050">
    <property type="entry name" value="EF_Ts"/>
    <property type="match status" value="1"/>
</dbReference>
<dbReference type="InterPro" id="IPR036402">
    <property type="entry name" value="EF-Ts_dimer_sf"/>
</dbReference>
<dbReference type="InterPro" id="IPR001816">
    <property type="entry name" value="Transl_elong_EFTs/EF1B"/>
</dbReference>
<dbReference type="InterPro" id="IPR014039">
    <property type="entry name" value="Transl_elong_EFTs/EF1B_dimer"/>
</dbReference>
<dbReference type="InterPro" id="IPR018101">
    <property type="entry name" value="Transl_elong_Ts_CS"/>
</dbReference>
<dbReference type="InterPro" id="IPR009060">
    <property type="entry name" value="UBA-like_sf"/>
</dbReference>
<dbReference type="NCBIfam" id="TIGR00116">
    <property type="entry name" value="tsf"/>
    <property type="match status" value="1"/>
</dbReference>
<dbReference type="PANTHER" id="PTHR11741">
    <property type="entry name" value="ELONGATION FACTOR TS"/>
    <property type="match status" value="1"/>
</dbReference>
<dbReference type="PANTHER" id="PTHR11741:SF0">
    <property type="entry name" value="ELONGATION FACTOR TS, MITOCHONDRIAL"/>
    <property type="match status" value="1"/>
</dbReference>
<dbReference type="Pfam" id="PF00889">
    <property type="entry name" value="EF_TS"/>
    <property type="match status" value="1"/>
</dbReference>
<dbReference type="SUPFAM" id="SSF54713">
    <property type="entry name" value="Elongation factor Ts (EF-Ts), dimerisation domain"/>
    <property type="match status" value="2"/>
</dbReference>
<dbReference type="SUPFAM" id="SSF46934">
    <property type="entry name" value="UBA-like"/>
    <property type="match status" value="1"/>
</dbReference>
<dbReference type="PROSITE" id="PS01127">
    <property type="entry name" value="EF_TS_2"/>
    <property type="match status" value="1"/>
</dbReference>
<gene>
    <name evidence="2" type="primary">EFTS</name>
    <name evidence="3" type="ordered locus">Ot02g04990</name>
</gene>